<evidence type="ECO:0000255" key="1">
    <source>
        <dbReference type="HAMAP-Rule" id="MF_00469"/>
    </source>
</evidence>
<sequence length="309" mass="34756">MTDSLTHTSPFLVAALYHFVSVPRFADLQAPLQTLCEENGVKGTLLLAHEGINGTIAGPDAGIHAVLAFLRAQPEFSGLEHKESRASKMPFLRMKVKLKKEIVTMGVEDIDPNKVVGTYVAAKDWNTLISDPDTIVIDTRNDYETAIGTFRGALDPKTKSFREFPEWVRQNPGLHNKPKVAMYCTGGIRCEKATAFMKAEGFDEVYHLKGGILKYLEEVPQEESLWDGACFVFDERVSVEHGLKEGEHRLCHACRNPITAEETTSPLYEEGVSCSHCYHTRTEEDRLRYRQRQHQIALAKKRGQRHIGS</sequence>
<organism>
    <name type="scientific">Rhizobium johnstonii (strain DSM 114642 / LMG 32736 / 3841)</name>
    <name type="common">Rhizobium leguminosarum bv. viciae</name>
    <dbReference type="NCBI Taxonomy" id="216596"/>
    <lineage>
        <taxon>Bacteria</taxon>
        <taxon>Pseudomonadati</taxon>
        <taxon>Pseudomonadota</taxon>
        <taxon>Alphaproteobacteria</taxon>
        <taxon>Hyphomicrobiales</taxon>
        <taxon>Rhizobiaceae</taxon>
        <taxon>Rhizobium/Agrobacterium group</taxon>
        <taxon>Rhizobium</taxon>
        <taxon>Rhizobium johnstonii</taxon>
    </lineage>
</organism>
<name>TRHO_RHIJ3</name>
<accession>Q1MBM8</accession>
<proteinExistence type="inferred from homology"/>
<feature type="chain" id="PRO_1000013763" description="tRNA uridine(34) hydroxylase">
    <location>
        <begin position="1"/>
        <end position="309"/>
    </location>
</feature>
<feature type="domain" description="Rhodanese" evidence="1">
    <location>
        <begin position="130"/>
        <end position="224"/>
    </location>
</feature>
<feature type="active site" description="Cysteine persulfide intermediate" evidence="1">
    <location>
        <position position="184"/>
    </location>
</feature>
<dbReference type="EC" id="1.14.-.-" evidence="1"/>
<dbReference type="EMBL" id="AM236080">
    <property type="protein sequence ID" value="CAK09655.1"/>
    <property type="molecule type" value="Genomic_DNA"/>
</dbReference>
<dbReference type="RefSeq" id="WP_011653569.1">
    <property type="nucleotide sequence ID" value="NC_008380.1"/>
</dbReference>
<dbReference type="SMR" id="Q1MBM8"/>
<dbReference type="EnsemblBacteria" id="CAK09655">
    <property type="protein sequence ID" value="CAK09655"/>
    <property type="gene ID" value="RL4166"/>
</dbReference>
<dbReference type="KEGG" id="rle:RL4166"/>
<dbReference type="eggNOG" id="COG1054">
    <property type="taxonomic scope" value="Bacteria"/>
</dbReference>
<dbReference type="HOGENOM" id="CLU_038878_0_0_5"/>
<dbReference type="Proteomes" id="UP000006575">
    <property type="component" value="Chromosome"/>
</dbReference>
<dbReference type="GO" id="GO:0016705">
    <property type="term" value="F:oxidoreductase activity, acting on paired donors, with incorporation or reduction of molecular oxygen"/>
    <property type="evidence" value="ECO:0007669"/>
    <property type="project" value="UniProtKB-UniRule"/>
</dbReference>
<dbReference type="GO" id="GO:0006400">
    <property type="term" value="P:tRNA modification"/>
    <property type="evidence" value="ECO:0007669"/>
    <property type="project" value="UniProtKB-UniRule"/>
</dbReference>
<dbReference type="CDD" id="cd01518">
    <property type="entry name" value="RHOD_YceA"/>
    <property type="match status" value="1"/>
</dbReference>
<dbReference type="Gene3D" id="3.30.70.100">
    <property type="match status" value="1"/>
</dbReference>
<dbReference type="Gene3D" id="3.40.250.10">
    <property type="entry name" value="Rhodanese-like domain"/>
    <property type="match status" value="1"/>
</dbReference>
<dbReference type="HAMAP" id="MF_00469">
    <property type="entry name" value="TrhO"/>
    <property type="match status" value="1"/>
</dbReference>
<dbReference type="InterPro" id="IPR001763">
    <property type="entry name" value="Rhodanese-like_dom"/>
</dbReference>
<dbReference type="InterPro" id="IPR036873">
    <property type="entry name" value="Rhodanese-like_dom_sf"/>
</dbReference>
<dbReference type="InterPro" id="IPR020936">
    <property type="entry name" value="TrhO"/>
</dbReference>
<dbReference type="InterPro" id="IPR040503">
    <property type="entry name" value="TRHO_N"/>
</dbReference>
<dbReference type="NCBIfam" id="NF001136">
    <property type="entry name" value="PRK00142.1-4"/>
    <property type="match status" value="1"/>
</dbReference>
<dbReference type="PANTHER" id="PTHR43268:SF3">
    <property type="entry name" value="RHODANESE-LIKE DOMAIN-CONTAINING PROTEIN 7-RELATED"/>
    <property type="match status" value="1"/>
</dbReference>
<dbReference type="PANTHER" id="PTHR43268">
    <property type="entry name" value="THIOSULFATE SULFURTRANSFERASE/RHODANESE-LIKE DOMAIN-CONTAINING PROTEIN 2"/>
    <property type="match status" value="1"/>
</dbReference>
<dbReference type="Pfam" id="PF00581">
    <property type="entry name" value="Rhodanese"/>
    <property type="match status" value="1"/>
</dbReference>
<dbReference type="Pfam" id="PF17773">
    <property type="entry name" value="UPF0176_N"/>
    <property type="match status" value="1"/>
</dbReference>
<dbReference type="SMART" id="SM00450">
    <property type="entry name" value="RHOD"/>
    <property type="match status" value="1"/>
</dbReference>
<dbReference type="SUPFAM" id="SSF52821">
    <property type="entry name" value="Rhodanese/Cell cycle control phosphatase"/>
    <property type="match status" value="1"/>
</dbReference>
<dbReference type="PROSITE" id="PS50206">
    <property type="entry name" value="RHODANESE_3"/>
    <property type="match status" value="1"/>
</dbReference>
<comment type="function">
    <text evidence="1">Catalyzes oxygen-dependent 5-hydroxyuridine (ho5U) modification at position 34 in tRNAs.</text>
</comment>
<comment type="catalytic activity">
    <reaction evidence="1">
        <text>uridine(34) in tRNA + AH2 + O2 = 5-hydroxyuridine(34) in tRNA + A + H2O</text>
        <dbReference type="Rhea" id="RHEA:64224"/>
        <dbReference type="Rhea" id="RHEA-COMP:11727"/>
        <dbReference type="Rhea" id="RHEA-COMP:13381"/>
        <dbReference type="ChEBI" id="CHEBI:13193"/>
        <dbReference type="ChEBI" id="CHEBI:15377"/>
        <dbReference type="ChEBI" id="CHEBI:15379"/>
        <dbReference type="ChEBI" id="CHEBI:17499"/>
        <dbReference type="ChEBI" id="CHEBI:65315"/>
        <dbReference type="ChEBI" id="CHEBI:136877"/>
    </reaction>
</comment>
<comment type="similarity">
    <text evidence="1">Belongs to the TrhO family.</text>
</comment>
<keyword id="KW-0560">Oxidoreductase</keyword>
<keyword id="KW-0819">tRNA processing</keyword>
<protein>
    <recommendedName>
        <fullName evidence="1">tRNA uridine(34) hydroxylase</fullName>
        <ecNumber evidence="1">1.14.-.-</ecNumber>
    </recommendedName>
    <alternativeName>
        <fullName evidence="1">tRNA hydroxylation protein O</fullName>
    </alternativeName>
</protein>
<reference key="1">
    <citation type="journal article" date="2006" name="Genome Biol.">
        <title>The genome of Rhizobium leguminosarum has recognizable core and accessory components.</title>
        <authorList>
            <person name="Young J.P.W."/>
            <person name="Crossman L.C."/>
            <person name="Johnston A.W.B."/>
            <person name="Thomson N.R."/>
            <person name="Ghazoui Z.F."/>
            <person name="Hull K.H."/>
            <person name="Wexler M."/>
            <person name="Curson A.R.J."/>
            <person name="Todd J.D."/>
            <person name="Poole P.S."/>
            <person name="Mauchline T.H."/>
            <person name="East A.K."/>
            <person name="Quail M.A."/>
            <person name="Churcher C."/>
            <person name="Arrowsmith C."/>
            <person name="Cherevach I."/>
            <person name="Chillingworth T."/>
            <person name="Clarke K."/>
            <person name="Cronin A."/>
            <person name="Davis P."/>
            <person name="Fraser A."/>
            <person name="Hance Z."/>
            <person name="Hauser H."/>
            <person name="Jagels K."/>
            <person name="Moule S."/>
            <person name="Mungall K."/>
            <person name="Norbertczak H."/>
            <person name="Rabbinowitsch E."/>
            <person name="Sanders M."/>
            <person name="Simmonds M."/>
            <person name="Whitehead S."/>
            <person name="Parkhill J."/>
        </authorList>
    </citation>
    <scope>NUCLEOTIDE SEQUENCE [LARGE SCALE GENOMIC DNA]</scope>
    <source>
        <strain>DSM 114642 / LMG 32736 / 3841</strain>
    </source>
</reference>
<gene>
    <name evidence="1" type="primary">trhO</name>
    <name type="ordered locus">RL4166</name>
</gene>